<feature type="chain" id="PRO_1000003460" description="Small ribosomal subunit protein bS18">
    <location>
        <begin position="1"/>
        <end position="91"/>
    </location>
</feature>
<organism>
    <name type="scientific">Burkholderia mallei (strain NCTC 10247)</name>
    <dbReference type="NCBI Taxonomy" id="320389"/>
    <lineage>
        <taxon>Bacteria</taxon>
        <taxon>Pseudomonadati</taxon>
        <taxon>Pseudomonadota</taxon>
        <taxon>Betaproteobacteria</taxon>
        <taxon>Burkholderiales</taxon>
        <taxon>Burkholderiaceae</taxon>
        <taxon>Burkholderia</taxon>
        <taxon>pseudomallei group</taxon>
    </lineage>
</organism>
<name>RS18_BURM7</name>
<proteinExistence type="inferred from homology"/>
<sequence length="91" mass="10613">MARPTGKKFDKRRQQQNPLFKRKKFCRFTAAGVEQIDYKDTETLKDFIGENGKITPARLTGTKAHYQRQLDTAIKRARFLALLPYTDQHKA</sequence>
<dbReference type="EMBL" id="CP000548">
    <property type="protein sequence ID" value="ABO04613.1"/>
    <property type="molecule type" value="Genomic_DNA"/>
</dbReference>
<dbReference type="RefSeq" id="WP_004193360.1">
    <property type="nucleotide sequence ID" value="NZ_CP007802.1"/>
</dbReference>
<dbReference type="SMR" id="A3MKD4"/>
<dbReference type="GeneID" id="93173028"/>
<dbReference type="KEGG" id="bmaz:BM44_1938"/>
<dbReference type="KEGG" id="bmn:BMA10247_1166"/>
<dbReference type="PATRIC" id="fig|320389.8.peg.2175"/>
<dbReference type="GO" id="GO:0022627">
    <property type="term" value="C:cytosolic small ribosomal subunit"/>
    <property type="evidence" value="ECO:0007669"/>
    <property type="project" value="TreeGrafter"/>
</dbReference>
<dbReference type="GO" id="GO:0070181">
    <property type="term" value="F:small ribosomal subunit rRNA binding"/>
    <property type="evidence" value="ECO:0007669"/>
    <property type="project" value="TreeGrafter"/>
</dbReference>
<dbReference type="GO" id="GO:0003735">
    <property type="term" value="F:structural constituent of ribosome"/>
    <property type="evidence" value="ECO:0007669"/>
    <property type="project" value="InterPro"/>
</dbReference>
<dbReference type="GO" id="GO:0006412">
    <property type="term" value="P:translation"/>
    <property type="evidence" value="ECO:0007669"/>
    <property type="project" value="UniProtKB-UniRule"/>
</dbReference>
<dbReference type="Gene3D" id="4.10.640.10">
    <property type="entry name" value="Ribosomal protein S18"/>
    <property type="match status" value="1"/>
</dbReference>
<dbReference type="HAMAP" id="MF_00270">
    <property type="entry name" value="Ribosomal_bS18"/>
    <property type="match status" value="1"/>
</dbReference>
<dbReference type="InterPro" id="IPR001648">
    <property type="entry name" value="Ribosomal_bS18"/>
</dbReference>
<dbReference type="InterPro" id="IPR018275">
    <property type="entry name" value="Ribosomal_bS18_CS"/>
</dbReference>
<dbReference type="InterPro" id="IPR036870">
    <property type="entry name" value="Ribosomal_bS18_sf"/>
</dbReference>
<dbReference type="NCBIfam" id="TIGR00165">
    <property type="entry name" value="S18"/>
    <property type="match status" value="1"/>
</dbReference>
<dbReference type="PANTHER" id="PTHR13479">
    <property type="entry name" value="30S RIBOSOMAL PROTEIN S18"/>
    <property type="match status" value="1"/>
</dbReference>
<dbReference type="PANTHER" id="PTHR13479:SF40">
    <property type="entry name" value="SMALL RIBOSOMAL SUBUNIT PROTEIN BS18M"/>
    <property type="match status" value="1"/>
</dbReference>
<dbReference type="Pfam" id="PF01084">
    <property type="entry name" value="Ribosomal_S18"/>
    <property type="match status" value="1"/>
</dbReference>
<dbReference type="PRINTS" id="PR00974">
    <property type="entry name" value="RIBOSOMALS18"/>
</dbReference>
<dbReference type="SUPFAM" id="SSF46911">
    <property type="entry name" value="Ribosomal protein S18"/>
    <property type="match status" value="1"/>
</dbReference>
<dbReference type="PROSITE" id="PS00057">
    <property type="entry name" value="RIBOSOMAL_S18"/>
    <property type="match status" value="1"/>
</dbReference>
<comment type="function">
    <text evidence="1">Binds as a heterodimer with protein bS6 to the central domain of the 16S rRNA, where it helps stabilize the platform of the 30S subunit.</text>
</comment>
<comment type="subunit">
    <text evidence="1">Part of the 30S ribosomal subunit. Forms a tight heterodimer with protein bS6.</text>
</comment>
<comment type="similarity">
    <text evidence="1">Belongs to the bacterial ribosomal protein bS18 family.</text>
</comment>
<protein>
    <recommendedName>
        <fullName evidence="1">Small ribosomal subunit protein bS18</fullName>
    </recommendedName>
    <alternativeName>
        <fullName evidence="2">30S ribosomal protein S18</fullName>
    </alternativeName>
</protein>
<gene>
    <name evidence="1" type="primary">rpsR</name>
    <name type="ordered locus">BMA10247_1166</name>
</gene>
<evidence type="ECO:0000255" key="1">
    <source>
        <dbReference type="HAMAP-Rule" id="MF_00270"/>
    </source>
</evidence>
<evidence type="ECO:0000305" key="2"/>
<keyword id="KW-0687">Ribonucleoprotein</keyword>
<keyword id="KW-0689">Ribosomal protein</keyword>
<keyword id="KW-0694">RNA-binding</keyword>
<keyword id="KW-0699">rRNA-binding</keyword>
<accession>A3MKD4</accession>
<reference key="1">
    <citation type="journal article" date="2010" name="Genome Biol. Evol.">
        <title>Continuing evolution of Burkholderia mallei through genome reduction and large-scale rearrangements.</title>
        <authorList>
            <person name="Losada L."/>
            <person name="Ronning C.M."/>
            <person name="DeShazer D."/>
            <person name="Woods D."/>
            <person name="Fedorova N."/>
            <person name="Kim H.S."/>
            <person name="Shabalina S.A."/>
            <person name="Pearson T.R."/>
            <person name="Brinkac L."/>
            <person name="Tan P."/>
            <person name="Nandi T."/>
            <person name="Crabtree J."/>
            <person name="Badger J."/>
            <person name="Beckstrom-Sternberg S."/>
            <person name="Saqib M."/>
            <person name="Schutzer S.E."/>
            <person name="Keim P."/>
            <person name="Nierman W.C."/>
        </authorList>
    </citation>
    <scope>NUCLEOTIDE SEQUENCE [LARGE SCALE GENOMIC DNA]</scope>
    <source>
        <strain>NCTC 10247</strain>
    </source>
</reference>